<keyword id="KW-0002">3D-structure</keyword>
<keyword id="KW-1003">Cell membrane</keyword>
<keyword id="KW-0217">Developmental protein</keyword>
<keyword id="KW-0221">Differentiation</keyword>
<keyword id="KW-1015">Disulfide bond</keyword>
<keyword id="KW-0325">Glycoprotein</keyword>
<keyword id="KW-0336">GPI-anchor</keyword>
<keyword id="KW-0449">Lipoprotein</keyword>
<keyword id="KW-0472">Membrane</keyword>
<keyword id="KW-0524">Neurogenesis</keyword>
<keyword id="KW-1267">Proteomics identification</keyword>
<keyword id="KW-1185">Reference proteome</keyword>
<keyword id="KW-0732">Signal</keyword>
<proteinExistence type="evidence at protein level"/>
<name>EFNA5_HUMAN</name>
<comment type="function">
    <text evidence="5 6">Cell surface GPI-bound ligand for Eph receptors, a family of receptor tyrosine kinases which are crucial for migration, repulsion and adhesion during neuronal, vascular and epithelial development. Binds promiscuously Eph receptors residing on adjacent cells, leading to contact-dependent bidirectional signaling into neighboring cells. The signaling pathway downstream of the receptor is referred to as forward signaling while the signaling pathway downstream of the ephrin ligand is referred to as reverse signaling. Induces compartmentalized signaling within a caveolae-like membrane microdomain when bound to the extracellular domain of its cognate receptor. This signaling event requires the activity of the Fyn tyrosine kinase. Activates the EPHA3 receptor to regulate cell-cell adhesion and cytoskeletal organization. With the receptor EPHA2 may regulate lens fiber cells shape and interactions and be important for lens transparency maintenance. May function actively to stimulate axon fasciculation. The interaction of EFNA5 with EPHA5 also mediates communication between pancreatic islet cells to regulate glucose-stimulated insulin secretion. Cognate/functional ligand for EPHA7, their interaction regulates brain development modulating cell-cell adhesion and repulsion.</text>
</comment>
<comment type="subunit">
    <text evidence="1 7">Binds to EPHB2. Interacts with EPHA8; activates EPHA8 (By similarity). Binds to the receptor tyrosine kinases EPHA2, EPHA3 and EPHB1. Forms a ternary EFNA5-EPHA3-ADAM10 complex mediating EFNA5 extracellular domain shedding by ADAM10 which regulates the EFNA5-EPHA3 complex internalization and function.</text>
</comment>
<comment type="interaction">
    <interactant intactId="EBI-1753674">
        <id>P52803</id>
    </interactant>
    <interactant intactId="EBI-13379418">
        <id>O00590</id>
        <label>ACKR2</label>
    </interactant>
    <organismsDiffer>false</organismsDiffer>
    <experiments>3</experiments>
</comment>
<comment type="interaction">
    <interactant intactId="EBI-1753674">
        <id>P52803</id>
    </interactant>
    <interactant intactId="EBI-12701138">
        <id>P41181</id>
        <label>AQP2</label>
    </interactant>
    <organismsDiffer>false</organismsDiffer>
    <experiments>3</experiments>
</comment>
<comment type="interaction">
    <interactant intactId="EBI-1753674">
        <id>P52803</id>
    </interactant>
    <interactant intactId="EBI-13059134">
        <id>Q13520</id>
        <label>AQP6</label>
    </interactant>
    <organismsDiffer>false</organismsDiffer>
    <experiments>3</experiments>
</comment>
<comment type="interaction">
    <interactant intactId="EBI-1753674">
        <id>P52803</id>
    </interactant>
    <interactant intactId="EBI-19947314">
        <id>Q8NFU1</id>
        <label>BEST2</label>
    </interactant>
    <organismsDiffer>false</organismsDiffer>
    <experiments>3</experiments>
</comment>
<comment type="interaction">
    <interactant intactId="EBI-1753674">
        <id>P52803</id>
    </interactant>
    <interactant intactId="EBI-6657396">
        <id>P19397</id>
        <label>CD53</label>
    </interactant>
    <organismsDiffer>false</organismsDiffer>
    <experiments>3</experiments>
</comment>
<comment type="interaction">
    <interactant intactId="EBI-1753674">
        <id>P52803</id>
    </interactant>
    <interactant intactId="EBI-18400628">
        <id>O00501</id>
        <label>CLDN5</label>
    </interactant>
    <organismsDiffer>false</organismsDiffer>
    <experiments>3</experiments>
</comment>
<comment type="interaction">
    <interactant intactId="EBI-1753674">
        <id>P52803</id>
    </interactant>
    <interactant intactId="EBI-8646596">
        <id>P49447</id>
        <label>CYB561</label>
    </interactant>
    <organismsDiffer>false</organismsDiffer>
    <experiments>3</experiments>
</comment>
<comment type="interaction">
    <interactant intactId="EBI-1753674">
        <id>P52803</id>
    </interactant>
    <interactant intactId="EBI-702104">
        <id>P29317</id>
        <label>EPHA2</label>
    </interactant>
    <organismsDiffer>false</organismsDiffer>
    <experiments>8</experiments>
</comment>
<comment type="interaction">
    <interactant intactId="EBI-1753674">
        <id>P52803</id>
    </interactant>
    <interactant intactId="EBI-5773557">
        <id>P54764</id>
        <label>EPHA4</label>
    </interactant>
    <organismsDiffer>false</organismsDiffer>
    <experiments>4</experiments>
</comment>
<comment type="interaction">
    <interactant intactId="EBI-1753674">
        <id>P52803</id>
    </interactant>
    <interactant intactId="EBI-1383428">
        <id>Q15375</id>
        <label>EPHA7</label>
    </interactant>
    <organismsDiffer>false</organismsDiffer>
    <experiments>4</experiments>
</comment>
<comment type="interaction">
    <interactant intactId="EBI-1753674">
        <id>P52803</id>
    </interactant>
    <interactant intactId="EBI-17762181">
        <id>O14843</id>
        <label>FFAR3</label>
    </interactant>
    <organismsDiffer>false</organismsDiffer>
    <experiments>3</experiments>
</comment>
<comment type="interaction">
    <interactant intactId="EBI-1753674">
        <id>P52803</id>
    </interactant>
    <interactant intactId="EBI-17565645">
        <id>P08034</id>
        <label>GJB1</label>
    </interactant>
    <organismsDiffer>false</organismsDiffer>
    <experiments>3</experiments>
</comment>
<comment type="interaction">
    <interactant intactId="EBI-1753674">
        <id>P52803</id>
    </interactant>
    <interactant intactId="EBI-11955647">
        <id>Q8TDV0</id>
        <label>GPR151</label>
    </interactant>
    <organismsDiffer>false</organismsDiffer>
    <experiments>3</experiments>
</comment>
<comment type="interaction">
    <interactant intactId="EBI-1753674">
        <id>P52803</id>
    </interactant>
    <interactant intactId="EBI-13345167">
        <id>Q8TDT2</id>
        <label>GPR152</label>
    </interactant>
    <organismsDiffer>false</organismsDiffer>
    <experiments>3</experiments>
</comment>
<comment type="interaction">
    <interactant intactId="EBI-1753674">
        <id>P52803</id>
    </interactant>
    <interactant intactId="EBI-6255622">
        <id>Q8N6U8</id>
        <label>GPR161</label>
    </interactant>
    <organismsDiffer>false</organismsDiffer>
    <experiments>3</experiments>
</comment>
<comment type="interaction">
    <interactant intactId="EBI-1753674">
        <id>P52803</id>
    </interactant>
    <interactant intactId="EBI-18076404">
        <id>O15529</id>
        <label>GPR42</label>
    </interactant>
    <organismsDiffer>false</organismsDiffer>
    <experiments>3</experiments>
</comment>
<comment type="interaction">
    <interactant intactId="EBI-1753674">
        <id>P52803</id>
    </interactant>
    <interactant intactId="EBI-2868124">
        <id>Q9BSE4</id>
        <label>HERPUD2</label>
    </interactant>
    <organismsDiffer>false</organismsDiffer>
    <experiments>3</experiments>
</comment>
<comment type="interaction">
    <interactant intactId="EBI-1753674">
        <id>P52803</id>
    </interactant>
    <interactant intactId="EBI-11427100">
        <id>P31937</id>
        <label>HIBADH</label>
    </interactant>
    <organismsDiffer>false</organismsDiffer>
    <experiments>3</experiments>
</comment>
<comment type="interaction">
    <interactant intactId="EBI-1753674">
        <id>P52803</id>
    </interactant>
    <interactant intactId="EBI-749265">
        <id>Q8N6L0</id>
        <label>KASH5</label>
    </interactant>
    <organismsDiffer>false</organismsDiffer>
    <experiments>3</experiments>
</comment>
<comment type="interaction">
    <interactant intactId="EBI-1753674">
        <id>P52803</id>
    </interactant>
    <interactant intactId="EBI-12806656">
        <id>Q96HJ5</id>
        <label>MS4A3</label>
    </interactant>
    <organismsDiffer>false</organismsDiffer>
    <experiments>3</experiments>
</comment>
<comment type="interaction">
    <interactant intactId="EBI-1753674">
        <id>P52803</id>
    </interactant>
    <interactant intactId="EBI-15853497">
        <id>Q9UBD6</id>
        <label>RHCG</label>
    </interactant>
    <organismsDiffer>false</organismsDiffer>
    <experiments>3</experiments>
</comment>
<comment type="interaction">
    <interactant intactId="EBI-1753674">
        <id>P52803</id>
    </interactant>
    <interactant intactId="EBI-1046170">
        <id>O95470</id>
        <label>SGPL1</label>
    </interactant>
    <organismsDiffer>false</organismsDiffer>
    <experiments>3</experiments>
</comment>
<comment type="interaction">
    <interactant intactId="EBI-1753674">
        <id>P52803</id>
    </interactant>
    <interactant intactId="EBI-18114847">
        <id>Q12908</id>
        <label>SLC10A2</label>
    </interactant>
    <organismsDiffer>false</organismsDiffer>
    <experiments>3</experiments>
</comment>
<comment type="interaction">
    <interactant intactId="EBI-1753674">
        <id>P52803</id>
    </interactant>
    <interactant intactId="EBI-12808018">
        <id>Q9UKG4</id>
        <label>SLC13A4</label>
    </interactant>
    <organismsDiffer>false</organismsDiffer>
    <experiments>3</experiments>
</comment>
<comment type="interaction">
    <interactant intactId="EBI-1753674">
        <id>P52803</id>
    </interactant>
    <interactant intactId="EBI-17295964">
        <id>Q9NQQ7-3</id>
        <label>SLC35C2</label>
    </interactant>
    <organismsDiffer>false</organismsDiffer>
    <experiments>3</experiments>
</comment>
<comment type="interaction">
    <interactant intactId="EBI-1753674">
        <id>P52803</id>
    </interactant>
    <interactant intactId="EBI-17280858">
        <id>Q8WWF3</id>
        <label>SSMEM1</label>
    </interactant>
    <organismsDiffer>false</organismsDiffer>
    <experiments>3</experiments>
</comment>
<comment type="interaction">
    <interactant intactId="EBI-1753674">
        <id>P52803</id>
    </interactant>
    <interactant intactId="EBI-13351685">
        <id>Q96CE8</id>
        <label>TM4SF18</label>
    </interactant>
    <organismsDiffer>false</organismsDiffer>
    <experiments>3</experiments>
</comment>
<comment type="interaction">
    <interactant intactId="EBI-1753674">
        <id>P52803</id>
    </interactant>
    <interactant intactId="EBI-10982110">
        <id>Q96Q45-2</id>
        <label>TMEM237</label>
    </interactant>
    <organismsDiffer>false</organismsDiffer>
    <experiments>3</experiments>
</comment>
<comment type="interaction">
    <interactant intactId="EBI-1753674">
        <id>P52803</id>
    </interactant>
    <interactant intactId="EBI-18055230">
        <id>P34981</id>
        <label>TRHR</label>
    </interactant>
    <organismsDiffer>false</organismsDiffer>
    <experiments>3</experiments>
</comment>
<comment type="interaction">
    <interactant intactId="EBI-1753674">
        <id>P52803</id>
    </interactant>
    <interactant intactId="EBI-12195249">
        <id>Q5TGU0</id>
        <label>TSPO2</label>
    </interactant>
    <organismsDiffer>false</organismsDiffer>
    <experiments>3</experiments>
</comment>
<comment type="interaction">
    <interactant intactId="EBI-1753674">
        <id>P52803</id>
    </interactant>
    <interactant intactId="EBI-751210">
        <id>Q96EC8</id>
        <label>YIPF6</label>
    </interactant>
    <organismsDiffer>false</organismsDiffer>
    <experiments>3</experiments>
</comment>
<comment type="subcellular location">
    <subcellularLocation>
        <location evidence="6">Cell membrane</location>
        <topology evidence="6">Lipid-anchor</topology>
        <topology evidence="6">GPI-anchor</topology>
    </subcellularLocation>
    <subcellularLocation>
        <location evidence="6">Membrane</location>
        <location evidence="6">Caveola</location>
        <topology evidence="6">Lipid-anchor</topology>
        <topology evidence="6">GPI-anchor</topology>
    </subcellularLocation>
    <text>Compartmentalized in discrete caveolae-like membrane microdomains.</text>
</comment>
<comment type="similarity">
    <text evidence="3">Belongs to the ephrin family.</text>
</comment>
<feature type="signal peptide" evidence="2">
    <location>
        <begin position="1"/>
        <end position="20"/>
    </location>
</feature>
<feature type="chain" id="PRO_0000008377" description="Ephrin-A5">
    <location>
        <begin position="21"/>
        <end position="203"/>
    </location>
</feature>
<feature type="propeptide" id="PRO_0000008378" description="Removed in mature form" evidence="2">
    <location>
        <begin position="204"/>
        <end position="228"/>
    </location>
</feature>
<feature type="domain" description="Ephrin RBD" evidence="3">
    <location>
        <begin position="29"/>
        <end position="162"/>
    </location>
</feature>
<feature type="region of interest" description="Disordered" evidence="4">
    <location>
        <begin position="186"/>
        <end position="205"/>
    </location>
</feature>
<feature type="compositionally biased region" description="Basic and acidic residues" evidence="4">
    <location>
        <begin position="190"/>
        <end position="200"/>
    </location>
</feature>
<feature type="lipid moiety-binding region" description="GPI-anchor amidated asparagine" evidence="2">
    <location>
        <position position="203"/>
    </location>
</feature>
<feature type="glycosylation site" description="N-linked (GlcNAc...) asparagine" evidence="8">
    <location>
        <position position="37"/>
    </location>
</feature>
<feature type="disulfide bond" evidence="8">
    <location>
        <begin position="62"/>
        <end position="102"/>
    </location>
</feature>
<feature type="disulfide bond" evidence="8">
    <location>
        <begin position="90"/>
        <end position="151"/>
    </location>
</feature>
<feature type="sequence variant" id="VAR_012035" description="In dbSNP:rs469062.">
    <original>N</original>
    <variation>K</variation>
    <location>
        <position position="55"/>
    </location>
</feature>
<feature type="strand" evidence="9">
    <location>
        <begin position="31"/>
        <end position="35"/>
    </location>
</feature>
<feature type="helix" evidence="9">
    <location>
        <begin position="41"/>
        <end position="43"/>
    </location>
</feature>
<feature type="strand" evidence="9">
    <location>
        <begin position="44"/>
        <end position="46"/>
    </location>
</feature>
<feature type="strand" evidence="9">
    <location>
        <begin position="49"/>
        <end position="52"/>
    </location>
</feature>
<feature type="strand" evidence="9">
    <location>
        <begin position="57"/>
        <end position="61"/>
    </location>
</feature>
<feature type="helix" evidence="9">
    <location>
        <begin position="71"/>
        <end position="73"/>
    </location>
</feature>
<feature type="strand" evidence="9">
    <location>
        <begin position="76"/>
        <end position="82"/>
    </location>
</feature>
<feature type="helix" evidence="9">
    <location>
        <begin position="84"/>
        <end position="89"/>
    </location>
</feature>
<feature type="turn" evidence="9">
    <location>
        <begin position="93"/>
        <end position="95"/>
    </location>
</feature>
<feature type="strand" evidence="9">
    <location>
        <begin position="96"/>
        <end position="102"/>
    </location>
</feature>
<feature type="strand" evidence="10">
    <location>
        <begin position="108"/>
        <end position="111"/>
    </location>
</feature>
<feature type="strand" evidence="9">
    <location>
        <begin position="113"/>
        <end position="117"/>
    </location>
</feature>
<feature type="strand" evidence="9">
    <location>
        <begin position="135"/>
        <end position="144"/>
    </location>
</feature>
<feature type="strand" evidence="9">
    <location>
        <begin position="153"/>
        <end position="158"/>
    </location>
</feature>
<feature type="helix" evidence="9">
    <location>
        <begin position="161"/>
        <end position="164"/>
    </location>
</feature>
<reference key="1">
    <citation type="journal article" date="1995" name="Neuron">
        <title>Cloning of AL-1, a ligand for an Eph-related tyrosine kinase receptor involved in axon bundle formation.</title>
        <authorList>
            <person name="Winslow J.W."/>
            <person name="Moran P."/>
            <person name="Valverde J."/>
            <person name="Shih A."/>
            <person name="Yuan J.Q."/>
            <person name="Wong S.C."/>
            <person name="Tsai S.P."/>
            <person name="Goddard A."/>
            <person name="Henzel W.J."/>
            <person name="Hefti F."/>
            <person name="Beck K.D."/>
            <person name="Caras I.W."/>
        </authorList>
    </citation>
    <scope>NUCLEOTIDE SEQUENCE [MRNA]</scope>
</reference>
<reference key="2">
    <citation type="journal article" date="1997" name="Cytokine">
        <title>LERK-7: a ligand of the Eph-related kinases is developmentally regulated in the brain.</title>
        <authorList>
            <person name="Kozlosky C.J."/>
            <person name="Vanden Bos T."/>
            <person name="Park L.S."/>
            <person name="Cerretti D.P."/>
            <person name="Carpenter M.K."/>
        </authorList>
    </citation>
    <scope>NUCLEOTIDE SEQUENCE [MRNA]</scope>
    <source>
        <tissue>Brain</tissue>
    </source>
</reference>
<reference key="3">
    <citation type="journal article" date="2004" name="Genome Res.">
        <title>The status, quality, and expansion of the NIH full-length cDNA project: the Mammalian Gene Collection (MGC).</title>
        <authorList>
            <consortium name="The MGC Project Team"/>
        </authorList>
    </citation>
    <scope>NUCLEOTIDE SEQUENCE [LARGE SCALE MRNA]</scope>
    <source>
        <tissue>Brain</tissue>
    </source>
</reference>
<reference key="4">
    <citation type="journal article" date="1999" name="Genes Dev.">
        <title>Compartmentalized signaling by GPI-anchored ephrin-A5 requires the Fyn tyrosine kinase to regulate cellular adhesion.</title>
        <authorList>
            <person name="Davy A."/>
            <person name="Gale N.W."/>
            <person name="Murray E.W."/>
            <person name="Klinghoffer R.A."/>
            <person name="Soriano P."/>
            <person name="Feuerstein C."/>
            <person name="Robbins S.M."/>
        </authorList>
    </citation>
    <scope>FUNCTION</scope>
</reference>
<reference key="5">
    <citation type="journal article" date="2002" name="J. Cell Sci.">
        <title>Ephrin-A5 induces rounding, blebbing and de-adhesion of EphA3-expressing 293T and melanoma cells by CrkII and Rho-mediated signalling.</title>
        <authorList>
            <person name="Lawrenson I.D."/>
            <person name="Wimmer-Kleikamp S.H."/>
            <person name="Lock P."/>
            <person name="Schoenwaelder S.M."/>
            <person name="Down M."/>
            <person name="Boyd A.W."/>
            <person name="Alewood P.F."/>
            <person name="Lackmann M."/>
        </authorList>
    </citation>
    <scope>FUNCTION IN CELL-CELL ADHESION</scope>
    <scope>EPHA3-BINDING</scope>
    <scope>SUBCELLULAR LOCATION</scope>
</reference>
<reference key="6">
    <citation type="journal article" date="2005" name="Cell">
        <title>Adam meets Eph: an ADAM substrate recognition module acts as a molecular switch for ephrin cleavage in trans.</title>
        <authorList>
            <person name="Janes P.W."/>
            <person name="Saha N."/>
            <person name="Barton W.A."/>
            <person name="Kolev M.V."/>
            <person name="Wimmer-Kleikamp S.H."/>
            <person name="Nievergall E."/>
            <person name="Blobel C.P."/>
            <person name="Himanen J.P."/>
            <person name="Lackmann M."/>
            <person name="Nikolov D.B."/>
        </authorList>
    </citation>
    <scope>IDENTIFICATION IN A COMPLEX WITH ADAM10 AND EPHA3</scope>
</reference>
<reference key="7">
    <citation type="journal article" date="2007" name="Protein Sci.">
        <title>Crystal structure of the human ephrin-A5 ectodomain.</title>
        <authorList>
            <person name="Nikolov D.B."/>
            <person name="Li C."/>
            <person name="Lackmann M."/>
            <person name="Jeffrey P."/>
            <person name="Himanen J.P."/>
        </authorList>
    </citation>
    <scope>X-RAY CRYSTALLOGRAPHY (2.1 ANGSTROMS) OF 27-189</scope>
    <scope>GLYCOSYLATION AT ASN-37</scope>
    <scope>DISULFIDE BONDS</scope>
</reference>
<evidence type="ECO:0000250" key="1"/>
<evidence type="ECO:0000255" key="2"/>
<evidence type="ECO:0000255" key="3">
    <source>
        <dbReference type="PROSITE-ProRule" id="PRU00884"/>
    </source>
</evidence>
<evidence type="ECO:0000256" key="4">
    <source>
        <dbReference type="SAM" id="MobiDB-lite"/>
    </source>
</evidence>
<evidence type="ECO:0000269" key="5">
    <source>
    </source>
</evidence>
<evidence type="ECO:0000269" key="6">
    <source>
    </source>
</evidence>
<evidence type="ECO:0000269" key="7">
    <source>
    </source>
</evidence>
<evidence type="ECO:0000269" key="8">
    <source>
    </source>
</evidence>
<evidence type="ECO:0007829" key="9">
    <source>
        <dbReference type="PDB" id="4L0P"/>
    </source>
</evidence>
<evidence type="ECO:0007829" key="10">
    <source>
        <dbReference type="PDB" id="4M4R"/>
    </source>
</evidence>
<protein>
    <recommendedName>
        <fullName>Ephrin-A5</fullName>
    </recommendedName>
    <alternativeName>
        <fullName>AL-1</fullName>
    </alternativeName>
    <alternativeName>
        <fullName>EPH-related receptor tyrosine kinase ligand 7</fullName>
        <shortName>LERK-7</shortName>
    </alternativeName>
</protein>
<organism>
    <name type="scientific">Homo sapiens</name>
    <name type="common">Human</name>
    <dbReference type="NCBI Taxonomy" id="9606"/>
    <lineage>
        <taxon>Eukaryota</taxon>
        <taxon>Metazoa</taxon>
        <taxon>Chordata</taxon>
        <taxon>Craniata</taxon>
        <taxon>Vertebrata</taxon>
        <taxon>Euteleostomi</taxon>
        <taxon>Mammalia</taxon>
        <taxon>Eutheria</taxon>
        <taxon>Euarchontoglires</taxon>
        <taxon>Primates</taxon>
        <taxon>Haplorrhini</taxon>
        <taxon>Catarrhini</taxon>
        <taxon>Hominidae</taxon>
        <taxon>Homo</taxon>
    </lineage>
</organism>
<dbReference type="EMBL" id="U26403">
    <property type="protein sequence ID" value="AAB60377.1"/>
    <property type="molecule type" value="mRNA"/>
</dbReference>
<dbReference type="EMBL" id="BC075054">
    <property type="protein sequence ID" value="AAH75054.1"/>
    <property type="molecule type" value="mRNA"/>
</dbReference>
<dbReference type="EMBL" id="BC075055">
    <property type="protein sequence ID" value="AAH75055.1"/>
    <property type="molecule type" value="mRNA"/>
</dbReference>
<dbReference type="CCDS" id="CCDS4097.1"/>
<dbReference type="PIR" id="I58170">
    <property type="entry name" value="I58170"/>
</dbReference>
<dbReference type="RefSeq" id="NP_001953.1">
    <property type="nucleotide sequence ID" value="NM_001962.3"/>
</dbReference>
<dbReference type="PDB" id="2X11">
    <property type="method" value="X-ray"/>
    <property type="resolution" value="4.83 A"/>
    <property type="chains" value="B=27-166"/>
</dbReference>
<dbReference type="PDB" id="3MX0">
    <property type="method" value="X-ray"/>
    <property type="resolution" value="3.51 A"/>
    <property type="chains" value="B/D=28-165"/>
</dbReference>
<dbReference type="PDB" id="4BK5">
    <property type="method" value="X-ray"/>
    <property type="resolution" value="4.00 A"/>
    <property type="chains" value="C=27-166"/>
</dbReference>
<dbReference type="PDB" id="4BKA">
    <property type="method" value="X-ray"/>
    <property type="resolution" value="5.30 A"/>
    <property type="chains" value="C=27-166"/>
</dbReference>
<dbReference type="PDB" id="4L0P">
    <property type="method" value="X-ray"/>
    <property type="resolution" value="2.26 A"/>
    <property type="chains" value="B=27-166"/>
</dbReference>
<dbReference type="PDB" id="4M4R">
    <property type="method" value="X-ray"/>
    <property type="resolution" value="3.13 A"/>
    <property type="chains" value="B/D/F/H=27-165"/>
</dbReference>
<dbReference type="PDBsum" id="2X11"/>
<dbReference type="PDBsum" id="3MX0"/>
<dbReference type="PDBsum" id="4BK5"/>
<dbReference type="PDBsum" id="4BKA"/>
<dbReference type="PDBsum" id="4L0P"/>
<dbReference type="PDBsum" id="4M4R"/>
<dbReference type="SMR" id="P52803"/>
<dbReference type="BioGRID" id="108266">
    <property type="interactions" value="69"/>
</dbReference>
<dbReference type="DIP" id="DIP-48296N"/>
<dbReference type="FunCoup" id="P52803">
    <property type="interactions" value="1329"/>
</dbReference>
<dbReference type="IntAct" id="P52803">
    <property type="interactions" value="60"/>
</dbReference>
<dbReference type="STRING" id="9606.ENSP00000328777"/>
<dbReference type="GlyConnect" id="1212">
    <property type="glycosylation" value="2 N-Linked glycans (1 site)"/>
</dbReference>
<dbReference type="GlyCosmos" id="P52803">
    <property type="glycosylation" value="1 site, 3 glycans"/>
</dbReference>
<dbReference type="GlyGen" id="P52803">
    <property type="glycosylation" value="3 sites, 11 N-linked glycans (1 site)"/>
</dbReference>
<dbReference type="iPTMnet" id="P52803"/>
<dbReference type="PhosphoSitePlus" id="P52803"/>
<dbReference type="SwissPalm" id="P52803"/>
<dbReference type="BioMuta" id="EFNA5"/>
<dbReference type="DMDM" id="1706678"/>
<dbReference type="jPOST" id="P52803"/>
<dbReference type="MassIVE" id="P52803"/>
<dbReference type="PaxDb" id="9606-ENSP00000328777"/>
<dbReference type="PeptideAtlas" id="P52803"/>
<dbReference type="ProteomicsDB" id="56539"/>
<dbReference type="Pumba" id="P52803"/>
<dbReference type="Antibodypedia" id="25277">
    <property type="antibodies" value="269 antibodies from 34 providers"/>
</dbReference>
<dbReference type="DNASU" id="1946"/>
<dbReference type="Ensembl" id="ENST00000333274.11">
    <property type="protein sequence ID" value="ENSP00000328777.6"/>
    <property type="gene ID" value="ENSG00000184349.14"/>
</dbReference>
<dbReference type="GeneID" id="1946"/>
<dbReference type="KEGG" id="hsa:1946"/>
<dbReference type="MANE-Select" id="ENST00000333274.11">
    <property type="protein sequence ID" value="ENSP00000328777.6"/>
    <property type="RefSeq nucleotide sequence ID" value="NM_001962.3"/>
    <property type="RefSeq protein sequence ID" value="NP_001953.1"/>
</dbReference>
<dbReference type="UCSC" id="uc003kol.3">
    <property type="organism name" value="human"/>
</dbReference>
<dbReference type="AGR" id="HGNC:3225"/>
<dbReference type="CTD" id="1946"/>
<dbReference type="DisGeNET" id="1946"/>
<dbReference type="GeneCards" id="EFNA5"/>
<dbReference type="HGNC" id="HGNC:3225">
    <property type="gene designation" value="EFNA5"/>
</dbReference>
<dbReference type="HPA" id="ENSG00000184349">
    <property type="expression patterns" value="Low tissue specificity"/>
</dbReference>
<dbReference type="MIM" id="601535">
    <property type="type" value="gene"/>
</dbReference>
<dbReference type="neXtProt" id="NX_P52803"/>
<dbReference type="OpenTargets" id="ENSG00000184349"/>
<dbReference type="PharmGKB" id="PA27660"/>
<dbReference type="VEuPathDB" id="HostDB:ENSG00000184349"/>
<dbReference type="eggNOG" id="KOG3858">
    <property type="taxonomic scope" value="Eukaryota"/>
</dbReference>
<dbReference type="GeneTree" id="ENSGT00940000157299"/>
<dbReference type="InParanoid" id="P52803"/>
<dbReference type="OMA" id="NCVKTIG"/>
<dbReference type="OrthoDB" id="6250301at2759"/>
<dbReference type="PAN-GO" id="P52803">
    <property type="GO annotations" value="7 GO annotations based on evolutionary models"/>
</dbReference>
<dbReference type="PhylomeDB" id="P52803"/>
<dbReference type="PathwayCommons" id="P52803"/>
<dbReference type="Reactome" id="R-HSA-2682334">
    <property type="pathway name" value="EPH-Ephrin signaling"/>
</dbReference>
<dbReference type="Reactome" id="R-HSA-3928663">
    <property type="pathway name" value="EPHA-mediated growth cone collapse"/>
</dbReference>
<dbReference type="Reactome" id="R-HSA-3928665">
    <property type="pathway name" value="EPH-ephrin mediated repulsion of cells"/>
</dbReference>
<dbReference type="SignaLink" id="P52803"/>
<dbReference type="SIGNOR" id="P52803"/>
<dbReference type="BioGRID-ORCS" id="1946">
    <property type="hits" value="19 hits in 1152 CRISPR screens"/>
</dbReference>
<dbReference type="ChiTaRS" id="EFNA5">
    <property type="organism name" value="human"/>
</dbReference>
<dbReference type="EvolutionaryTrace" id="P52803"/>
<dbReference type="GeneWiki" id="EFNA5"/>
<dbReference type="GeneWiki" id="Ephrin-A5"/>
<dbReference type="GenomeRNAi" id="1946"/>
<dbReference type="Pharos" id="P52803">
    <property type="development level" value="Tbio"/>
</dbReference>
<dbReference type="PRO" id="PR:P52803"/>
<dbReference type="Proteomes" id="UP000005640">
    <property type="component" value="Chromosome 5"/>
</dbReference>
<dbReference type="RNAct" id="P52803">
    <property type="molecule type" value="protein"/>
</dbReference>
<dbReference type="Bgee" id="ENSG00000184349">
    <property type="expression patterns" value="Expressed in hair follicle and 188 other cell types or tissues"/>
</dbReference>
<dbReference type="ExpressionAtlas" id="P52803">
    <property type="expression patterns" value="baseline and differential"/>
</dbReference>
<dbReference type="GO" id="GO:0005912">
    <property type="term" value="C:adherens junction"/>
    <property type="evidence" value="ECO:0007669"/>
    <property type="project" value="Ensembl"/>
</dbReference>
<dbReference type="GO" id="GO:0005604">
    <property type="term" value="C:basement membrane"/>
    <property type="evidence" value="ECO:0007669"/>
    <property type="project" value="Ensembl"/>
</dbReference>
<dbReference type="GO" id="GO:0005901">
    <property type="term" value="C:caveola"/>
    <property type="evidence" value="ECO:0007669"/>
    <property type="project" value="UniProtKB-SubCell"/>
</dbReference>
<dbReference type="GO" id="GO:0009897">
    <property type="term" value="C:external side of plasma membrane"/>
    <property type="evidence" value="ECO:0000314"/>
    <property type="project" value="UniProtKB"/>
</dbReference>
<dbReference type="GO" id="GO:0098982">
    <property type="term" value="C:GABA-ergic synapse"/>
    <property type="evidence" value="ECO:0007669"/>
    <property type="project" value="Ensembl"/>
</dbReference>
<dbReference type="GO" id="GO:0005886">
    <property type="term" value="C:plasma membrane"/>
    <property type="evidence" value="ECO:0000250"/>
    <property type="project" value="UniProtKB"/>
</dbReference>
<dbReference type="GO" id="GO:0045499">
    <property type="term" value="F:chemorepellent activity"/>
    <property type="evidence" value="ECO:0007669"/>
    <property type="project" value="Ensembl"/>
</dbReference>
<dbReference type="GO" id="GO:0046875">
    <property type="term" value="F:ephrin receptor binding"/>
    <property type="evidence" value="ECO:0000353"/>
    <property type="project" value="UniProtKB"/>
</dbReference>
<dbReference type="GO" id="GO:0005168">
    <property type="term" value="F:neurotrophin TRKA receptor binding"/>
    <property type="evidence" value="ECO:0000303"/>
    <property type="project" value="BHF-UCL"/>
</dbReference>
<dbReference type="GO" id="GO:0005169">
    <property type="term" value="F:neurotrophin TRKB receptor binding"/>
    <property type="evidence" value="ECO:0000303"/>
    <property type="project" value="BHF-UCL"/>
</dbReference>
<dbReference type="GO" id="GO:0005170">
    <property type="term" value="F:neurotrophin TRKC receptor binding"/>
    <property type="evidence" value="ECO:0000303"/>
    <property type="project" value="BHF-UCL"/>
</dbReference>
<dbReference type="GO" id="GO:0030297">
    <property type="term" value="F:transmembrane receptor protein tyrosine kinase activator activity"/>
    <property type="evidence" value="ECO:0000303"/>
    <property type="project" value="BHF-UCL"/>
</dbReference>
<dbReference type="GO" id="GO:0007411">
    <property type="term" value="P:axon guidance"/>
    <property type="evidence" value="ECO:0000318"/>
    <property type="project" value="GO_Central"/>
</dbReference>
<dbReference type="GO" id="GO:0071372">
    <property type="term" value="P:cellular response to follicle-stimulating hormone stimulus"/>
    <property type="evidence" value="ECO:0007669"/>
    <property type="project" value="Ensembl"/>
</dbReference>
<dbReference type="GO" id="GO:1904322">
    <property type="term" value="P:cellular response to forskolin"/>
    <property type="evidence" value="ECO:0007669"/>
    <property type="project" value="Ensembl"/>
</dbReference>
<dbReference type="GO" id="GO:0048668">
    <property type="term" value="P:collateral sprouting"/>
    <property type="evidence" value="ECO:0007669"/>
    <property type="project" value="Ensembl"/>
</dbReference>
<dbReference type="GO" id="GO:0048013">
    <property type="term" value="P:ephrin receptor signaling pathway"/>
    <property type="evidence" value="ECO:0000314"/>
    <property type="project" value="UniProtKB"/>
</dbReference>
<dbReference type="GO" id="GO:1900025">
    <property type="term" value="P:negative regulation of substrate adhesion-dependent cell spreading"/>
    <property type="evidence" value="ECO:0000314"/>
    <property type="project" value="MGI"/>
</dbReference>
<dbReference type="GO" id="GO:0007399">
    <property type="term" value="P:nervous system development"/>
    <property type="evidence" value="ECO:0000304"/>
    <property type="project" value="ProtInc"/>
</dbReference>
<dbReference type="GO" id="GO:0048672">
    <property type="term" value="P:positive regulation of collateral sprouting"/>
    <property type="evidence" value="ECO:0007669"/>
    <property type="project" value="Ensembl"/>
</dbReference>
<dbReference type="GO" id="GO:0050731">
    <property type="term" value="P:positive regulation of peptidyl-tyrosine phosphorylation"/>
    <property type="evidence" value="ECO:0000250"/>
    <property type="project" value="UniProtKB"/>
</dbReference>
<dbReference type="GO" id="GO:0051897">
    <property type="term" value="P:positive regulation of phosphatidylinositol 3-kinase/protein kinase B signal transduction"/>
    <property type="evidence" value="ECO:0000303"/>
    <property type="project" value="BHF-UCL"/>
</dbReference>
<dbReference type="GO" id="GO:0051965">
    <property type="term" value="P:positive regulation of synapse assembly"/>
    <property type="evidence" value="ECO:0007669"/>
    <property type="project" value="Ensembl"/>
</dbReference>
<dbReference type="GO" id="GO:0032956">
    <property type="term" value="P:regulation of actin cytoskeleton organization"/>
    <property type="evidence" value="ECO:0000314"/>
    <property type="project" value="UniProtKB"/>
</dbReference>
<dbReference type="GO" id="GO:0022604">
    <property type="term" value="P:regulation of cell morphogenesis"/>
    <property type="evidence" value="ECO:0000314"/>
    <property type="project" value="MGI"/>
</dbReference>
<dbReference type="GO" id="GO:0022407">
    <property type="term" value="P:regulation of cell-cell adhesion"/>
    <property type="evidence" value="ECO:0000314"/>
    <property type="project" value="UniProtKB"/>
</dbReference>
<dbReference type="GO" id="GO:0051893">
    <property type="term" value="P:regulation of focal adhesion assembly"/>
    <property type="evidence" value="ECO:0000314"/>
    <property type="project" value="UniProtKB"/>
</dbReference>
<dbReference type="GO" id="GO:0043087">
    <property type="term" value="P:regulation of GTPase activity"/>
    <property type="evidence" value="ECO:0000314"/>
    <property type="project" value="UniProtKB"/>
</dbReference>
<dbReference type="GO" id="GO:0061178">
    <property type="term" value="P:regulation of insulin secretion involved in cellular response to glucose stimulus"/>
    <property type="evidence" value="ECO:0000250"/>
    <property type="project" value="UniProtKB"/>
</dbReference>
<dbReference type="GO" id="GO:0070507">
    <property type="term" value="P:regulation of microtubule cytoskeleton organization"/>
    <property type="evidence" value="ECO:0000314"/>
    <property type="project" value="UniProtKB"/>
</dbReference>
<dbReference type="GO" id="GO:0031290">
    <property type="term" value="P:retinal ganglion cell axon guidance"/>
    <property type="evidence" value="ECO:0007669"/>
    <property type="project" value="Ensembl"/>
</dbReference>
<dbReference type="GO" id="GO:0099560">
    <property type="term" value="P:synaptic membrane adhesion"/>
    <property type="evidence" value="ECO:0007669"/>
    <property type="project" value="Ensembl"/>
</dbReference>
<dbReference type="CDD" id="cd10425">
    <property type="entry name" value="Ephrin-A_Ectodomain"/>
    <property type="match status" value="1"/>
</dbReference>
<dbReference type="FunFam" id="2.60.40.420:FF:000005">
    <property type="entry name" value="Ephrin A5"/>
    <property type="match status" value="1"/>
</dbReference>
<dbReference type="Gene3D" id="2.60.40.420">
    <property type="entry name" value="Cupredoxins - blue copper proteins"/>
    <property type="match status" value="1"/>
</dbReference>
<dbReference type="InterPro" id="IPR008972">
    <property type="entry name" value="Cupredoxin"/>
</dbReference>
<dbReference type="InterPro" id="IPR031328">
    <property type="entry name" value="Ephrin"/>
</dbReference>
<dbReference type="InterPro" id="IPR034252">
    <property type="entry name" value="Ephrin-A_Ecto"/>
</dbReference>
<dbReference type="InterPro" id="IPR019765">
    <property type="entry name" value="Ephrin_CS"/>
</dbReference>
<dbReference type="InterPro" id="IPR001799">
    <property type="entry name" value="Ephrin_RBD"/>
</dbReference>
<dbReference type="PANTHER" id="PTHR11304">
    <property type="entry name" value="EPHRIN"/>
    <property type="match status" value="1"/>
</dbReference>
<dbReference type="PANTHER" id="PTHR11304:SF33">
    <property type="entry name" value="EPHRIN-A5"/>
    <property type="match status" value="1"/>
</dbReference>
<dbReference type="Pfam" id="PF00812">
    <property type="entry name" value="Ephrin"/>
    <property type="match status" value="1"/>
</dbReference>
<dbReference type="PRINTS" id="PR01347">
    <property type="entry name" value="EPHRIN"/>
</dbReference>
<dbReference type="SUPFAM" id="SSF49503">
    <property type="entry name" value="Cupredoxins"/>
    <property type="match status" value="1"/>
</dbReference>
<dbReference type="PROSITE" id="PS01299">
    <property type="entry name" value="EPHRIN_RBD_1"/>
    <property type="match status" value="1"/>
</dbReference>
<dbReference type="PROSITE" id="PS51551">
    <property type="entry name" value="EPHRIN_RBD_2"/>
    <property type="match status" value="1"/>
</dbReference>
<accession>P52803</accession>
<sequence>MLHVEMLTLVFLVLWMCVFSQDPGSKAVADRYAVYWNSSNPRFQRGDYHIDVCINDYLDVFCPHYEDSVPEDKTERYVLYMVNFDGYSACDHTSKGFKRWECNRPHSPNGPLKFSEKFQLFTPFSLGFEFRPGREYFYISSAIPDNGRRSCLKLKVFVRPTNSCMKTIGVHDRVFDVNDKVENSLEPADDTVHESAEPSRGENAAQTPRIPSRLLAILLFLLAMLLTL</sequence>
<gene>
    <name type="primary">EFNA5</name>
    <name type="synonym">EPLG7</name>
    <name type="synonym">LERK7</name>
</gene>